<proteinExistence type="evidence at protein level"/>
<gene>
    <name type="primary">rps102</name>
    <name type="synonym">rps1-2</name>
    <name type="synonym">rps3a-2</name>
    <name type="ORF">SPAC22H12.04c</name>
</gene>
<organism>
    <name type="scientific">Schizosaccharomyces pombe (strain 972 / ATCC 24843)</name>
    <name type="common">Fission yeast</name>
    <dbReference type="NCBI Taxonomy" id="284812"/>
    <lineage>
        <taxon>Eukaryota</taxon>
        <taxon>Fungi</taxon>
        <taxon>Dikarya</taxon>
        <taxon>Ascomycota</taxon>
        <taxon>Taphrinomycotina</taxon>
        <taxon>Schizosaccharomycetes</taxon>
        <taxon>Schizosaccharomycetales</taxon>
        <taxon>Schizosaccharomycetaceae</taxon>
        <taxon>Schizosaccharomyces</taxon>
    </lineage>
</organism>
<dbReference type="EMBL" id="CU329670">
    <property type="protein sequence ID" value="CAA22556.1"/>
    <property type="molecule type" value="Genomic_DNA"/>
</dbReference>
<dbReference type="EMBL" id="AF127914">
    <property type="protein sequence ID" value="AAD33346.1"/>
    <property type="molecule type" value="mRNA"/>
</dbReference>
<dbReference type="PIR" id="T38219">
    <property type="entry name" value="T38219"/>
</dbReference>
<dbReference type="RefSeq" id="NP_593116.1">
    <property type="nucleotide sequence ID" value="NM_001018513.2"/>
</dbReference>
<dbReference type="PDB" id="9AXT">
    <property type="method" value="EM"/>
    <property type="resolution" value="2.40 A"/>
    <property type="chains" value="AE=1-252"/>
</dbReference>
<dbReference type="PDB" id="9AXV">
    <property type="method" value="EM"/>
    <property type="resolution" value="2.40 A"/>
    <property type="chains" value="AE=1-252"/>
</dbReference>
<dbReference type="PDBsum" id="9AXT"/>
<dbReference type="PDBsum" id="9AXV"/>
<dbReference type="EMDB" id="EMD-43972"/>
<dbReference type="EMDB" id="EMD-43976"/>
<dbReference type="SMR" id="O94438"/>
<dbReference type="BioGRID" id="278231">
    <property type="interactions" value="12"/>
</dbReference>
<dbReference type="FunCoup" id="O94438">
    <property type="interactions" value="712"/>
</dbReference>
<dbReference type="IntAct" id="O94438">
    <property type="interactions" value="4"/>
</dbReference>
<dbReference type="MINT" id="O94438"/>
<dbReference type="STRING" id="284812.O94438"/>
<dbReference type="iPTMnet" id="O94438"/>
<dbReference type="PaxDb" id="4896-SPAC22H12.04c.1"/>
<dbReference type="EnsemblFungi" id="SPAC22H12.04c.1">
    <property type="protein sequence ID" value="SPAC22H12.04c.1:pep"/>
    <property type="gene ID" value="SPAC22H12.04c"/>
</dbReference>
<dbReference type="GeneID" id="2541737"/>
<dbReference type="KEGG" id="spo:2541737"/>
<dbReference type="PomBase" id="SPAC22H12.04c">
    <property type="gene designation" value="rps102"/>
</dbReference>
<dbReference type="VEuPathDB" id="FungiDB:SPAC22H12.04c"/>
<dbReference type="eggNOG" id="KOG1628">
    <property type="taxonomic scope" value="Eukaryota"/>
</dbReference>
<dbReference type="HOGENOM" id="CLU_062507_0_0_1"/>
<dbReference type="InParanoid" id="O94438"/>
<dbReference type="OMA" id="TRFKGHE"/>
<dbReference type="PhylomeDB" id="O94438"/>
<dbReference type="PRO" id="PR:O94438"/>
<dbReference type="Proteomes" id="UP000002485">
    <property type="component" value="Chromosome I"/>
</dbReference>
<dbReference type="GO" id="GO:0005829">
    <property type="term" value="C:cytosol"/>
    <property type="evidence" value="ECO:0007005"/>
    <property type="project" value="PomBase"/>
</dbReference>
<dbReference type="GO" id="GO:0022627">
    <property type="term" value="C:cytosolic small ribosomal subunit"/>
    <property type="evidence" value="ECO:0000269"/>
    <property type="project" value="PomBase"/>
</dbReference>
<dbReference type="GO" id="GO:0003735">
    <property type="term" value="F:structural constituent of ribosome"/>
    <property type="evidence" value="ECO:0000266"/>
    <property type="project" value="PomBase"/>
</dbReference>
<dbReference type="GO" id="GO:0002181">
    <property type="term" value="P:cytoplasmic translation"/>
    <property type="evidence" value="ECO:0000266"/>
    <property type="project" value="PomBase"/>
</dbReference>
<dbReference type="GO" id="GO:0042254">
    <property type="term" value="P:ribosome biogenesis"/>
    <property type="evidence" value="ECO:0000266"/>
    <property type="project" value="PomBase"/>
</dbReference>
<dbReference type="HAMAP" id="MF_03122">
    <property type="entry name" value="Ribosomal_eS1_euk"/>
    <property type="match status" value="1"/>
</dbReference>
<dbReference type="InterPro" id="IPR001593">
    <property type="entry name" value="Ribosomal_eS1"/>
</dbReference>
<dbReference type="InterPro" id="IPR018281">
    <property type="entry name" value="Ribosomal_eS1_CS"/>
</dbReference>
<dbReference type="InterPro" id="IPR027500">
    <property type="entry name" value="Ribosomal_eS1_euk"/>
</dbReference>
<dbReference type="PANTHER" id="PTHR11830">
    <property type="entry name" value="40S RIBOSOMAL PROTEIN S3A"/>
    <property type="match status" value="1"/>
</dbReference>
<dbReference type="Pfam" id="PF01015">
    <property type="entry name" value="Ribosomal_S3Ae"/>
    <property type="match status" value="1"/>
</dbReference>
<dbReference type="SMART" id="SM01397">
    <property type="entry name" value="Ribosomal_S3Ae"/>
    <property type="match status" value="1"/>
</dbReference>
<dbReference type="PROSITE" id="PS01191">
    <property type="entry name" value="RIBOSOMAL_S3AE"/>
    <property type="match status" value="1"/>
</dbReference>
<sequence length="252" mass="28521">MAVGKNKRLSKGKKGIKKRVVDPFSRKEWYDIKAPAFFEVKNVGKTLVNRTAGLKNANDSLKGRILEVSLADLQKDEEHAFRKVKLRVEDIQGKSCLTSFNGLSITSDKLRSLVRKWQTTIEADQTIKTTDGYLCRVFVIGFTRRRANQVKKTTYAQSSQIRAIRQKMFQVIQNQTSSCSMRELVQKLIPEVIGREIERATGSIFPLQNVLVRKVKILKAPKHDAQKLLELHGESQDVGTKVVKDVAPLESV</sequence>
<evidence type="ECO:0000250" key="1">
    <source>
        <dbReference type="UniProtKB" id="P23248"/>
    </source>
</evidence>
<evidence type="ECO:0000255" key="2">
    <source>
        <dbReference type="HAMAP-Rule" id="MF_03122"/>
    </source>
</evidence>
<evidence type="ECO:0000269" key="3">
    <source>
    </source>
</evidence>
<evidence type="ECO:0000269" key="4">
    <source>
    </source>
</evidence>
<protein>
    <recommendedName>
        <fullName evidence="2">Small ribosomal subunit protein eS1B</fullName>
    </recommendedName>
    <alternativeName>
        <fullName>40S ribosomal protein S1-B</fullName>
    </alternativeName>
    <alternativeName>
        <fullName>S3aE-B</fullName>
    </alternativeName>
</protein>
<accession>O94438</accession>
<keyword id="KW-0002">3D-structure</keyword>
<keyword id="KW-0007">Acetylation</keyword>
<keyword id="KW-0963">Cytoplasm</keyword>
<keyword id="KW-0597">Phosphoprotein</keyword>
<keyword id="KW-1185">Reference proteome</keyword>
<keyword id="KW-0687">Ribonucleoprotein</keyword>
<keyword id="KW-0689">Ribosomal protein</keyword>
<feature type="initiator methionine" description="Removed" evidence="2">
    <location>
        <position position="1"/>
    </location>
</feature>
<feature type="chain" id="PRO_0000153540" description="Small ribosomal subunit protein eS1B">
    <location>
        <begin position="2"/>
        <end position="252"/>
    </location>
</feature>
<feature type="modified residue" description="N-acetylalanine; partial" evidence="2">
    <location>
        <position position="2"/>
    </location>
</feature>
<feature type="modified residue" description="Phosphoserine" evidence="4">
    <location>
        <position position="251"/>
    </location>
</feature>
<reference key="1">
    <citation type="submission" date="1999-02" db="EMBL/GenBank/DDBJ databases">
        <title>Molecular cloning of some components of the translation apparatus of the fission yeast Schizosaccharomyces pombe and the first unified list of cytoplasmic ribosomal proteins of this microorganism.</title>
        <authorList>
            <person name="Shpakovski G.V."/>
            <person name="Baranova G.M."/>
            <person name="Wood V."/>
            <person name="Gwilliam R.G."/>
            <person name="Shematorova E.K."/>
            <person name="Korol'chuk O.L."/>
            <person name="Lebedenko E.N."/>
        </authorList>
    </citation>
    <scope>NUCLEOTIDE SEQUENCE [MRNA]</scope>
    <source>
        <strain>972 / ATCC 24843</strain>
    </source>
</reference>
<reference key="2">
    <citation type="journal article" date="2002" name="Nature">
        <title>The genome sequence of Schizosaccharomyces pombe.</title>
        <authorList>
            <person name="Wood V."/>
            <person name="Gwilliam R."/>
            <person name="Rajandream M.A."/>
            <person name="Lyne M.H."/>
            <person name="Lyne R."/>
            <person name="Stewart A."/>
            <person name="Sgouros J.G."/>
            <person name="Peat N."/>
            <person name="Hayles J."/>
            <person name="Baker S.G."/>
            <person name="Basham D."/>
            <person name="Bowman S."/>
            <person name="Brooks K."/>
            <person name="Brown D."/>
            <person name="Brown S."/>
            <person name="Chillingworth T."/>
            <person name="Churcher C.M."/>
            <person name="Collins M."/>
            <person name="Connor R."/>
            <person name="Cronin A."/>
            <person name="Davis P."/>
            <person name="Feltwell T."/>
            <person name="Fraser A."/>
            <person name="Gentles S."/>
            <person name="Goble A."/>
            <person name="Hamlin N."/>
            <person name="Harris D.E."/>
            <person name="Hidalgo J."/>
            <person name="Hodgson G."/>
            <person name="Holroyd S."/>
            <person name="Hornsby T."/>
            <person name="Howarth S."/>
            <person name="Huckle E.J."/>
            <person name="Hunt S."/>
            <person name="Jagels K."/>
            <person name="James K.D."/>
            <person name="Jones L."/>
            <person name="Jones M."/>
            <person name="Leather S."/>
            <person name="McDonald S."/>
            <person name="McLean J."/>
            <person name="Mooney P."/>
            <person name="Moule S."/>
            <person name="Mungall K.L."/>
            <person name="Murphy L.D."/>
            <person name="Niblett D."/>
            <person name="Odell C."/>
            <person name="Oliver K."/>
            <person name="O'Neil S."/>
            <person name="Pearson D."/>
            <person name="Quail M.A."/>
            <person name="Rabbinowitsch E."/>
            <person name="Rutherford K.M."/>
            <person name="Rutter S."/>
            <person name="Saunders D."/>
            <person name="Seeger K."/>
            <person name="Sharp S."/>
            <person name="Skelton J."/>
            <person name="Simmonds M.N."/>
            <person name="Squares R."/>
            <person name="Squares S."/>
            <person name="Stevens K."/>
            <person name="Taylor K."/>
            <person name="Taylor R.G."/>
            <person name="Tivey A."/>
            <person name="Walsh S.V."/>
            <person name="Warren T."/>
            <person name="Whitehead S."/>
            <person name="Woodward J.R."/>
            <person name="Volckaert G."/>
            <person name="Aert R."/>
            <person name="Robben J."/>
            <person name="Grymonprez B."/>
            <person name="Weltjens I."/>
            <person name="Vanstreels E."/>
            <person name="Rieger M."/>
            <person name="Schaefer M."/>
            <person name="Mueller-Auer S."/>
            <person name="Gabel C."/>
            <person name="Fuchs M."/>
            <person name="Duesterhoeft A."/>
            <person name="Fritzc C."/>
            <person name="Holzer E."/>
            <person name="Moestl D."/>
            <person name="Hilbert H."/>
            <person name="Borzym K."/>
            <person name="Langer I."/>
            <person name="Beck A."/>
            <person name="Lehrach H."/>
            <person name="Reinhardt R."/>
            <person name="Pohl T.M."/>
            <person name="Eger P."/>
            <person name="Zimmermann W."/>
            <person name="Wedler H."/>
            <person name="Wambutt R."/>
            <person name="Purnelle B."/>
            <person name="Goffeau A."/>
            <person name="Cadieu E."/>
            <person name="Dreano S."/>
            <person name="Gloux S."/>
            <person name="Lelaure V."/>
            <person name="Mottier S."/>
            <person name="Galibert F."/>
            <person name="Aves S.J."/>
            <person name="Xiang Z."/>
            <person name="Hunt C."/>
            <person name="Moore K."/>
            <person name="Hurst S.M."/>
            <person name="Lucas M."/>
            <person name="Rochet M."/>
            <person name="Gaillardin C."/>
            <person name="Tallada V.A."/>
            <person name="Garzon A."/>
            <person name="Thode G."/>
            <person name="Daga R.R."/>
            <person name="Cruzado L."/>
            <person name="Jimenez J."/>
            <person name="Sanchez M."/>
            <person name="del Rey F."/>
            <person name="Benito J."/>
            <person name="Dominguez A."/>
            <person name="Revuelta J.L."/>
            <person name="Moreno S."/>
            <person name="Armstrong J."/>
            <person name="Forsburg S.L."/>
            <person name="Cerutti L."/>
            <person name="Lowe T."/>
            <person name="McCombie W.R."/>
            <person name="Paulsen I."/>
            <person name="Potashkin J."/>
            <person name="Shpakovski G.V."/>
            <person name="Ussery D."/>
            <person name="Barrell B.G."/>
            <person name="Nurse P."/>
        </authorList>
    </citation>
    <scope>NUCLEOTIDE SEQUENCE [LARGE SCALE GENOMIC DNA]</scope>
    <source>
        <strain>972 / ATCC 24843</strain>
    </source>
</reference>
<reference key="3">
    <citation type="journal article" date="2008" name="J. Proteome Res.">
        <title>Phosphoproteome analysis of fission yeast.</title>
        <authorList>
            <person name="Wilson-Grady J.T."/>
            <person name="Villen J."/>
            <person name="Gygi S.P."/>
        </authorList>
    </citation>
    <scope>PHOSPHORYLATION [LARGE SCALE ANALYSIS] AT SER-251</scope>
    <scope>IDENTIFICATION BY MASS SPECTROMETRY</scope>
</reference>
<reference key="4">
    <citation type="journal article" date="2006" name="Nat. Biotechnol.">
        <title>ORFeome cloning and global analysis of protein localization in the fission yeast Schizosaccharomyces pombe.</title>
        <authorList>
            <person name="Matsuyama A."/>
            <person name="Arai R."/>
            <person name="Yashiroda Y."/>
            <person name="Shirai A."/>
            <person name="Kamata A."/>
            <person name="Sekido S."/>
            <person name="Kobayashi Y."/>
            <person name="Hashimoto A."/>
            <person name="Hamamoto M."/>
            <person name="Hiraoka Y."/>
            <person name="Horinouchi S."/>
            <person name="Yoshida M."/>
        </authorList>
    </citation>
    <scope>SUBCELLULAR LOCATION [LARGE SCALE ANALYSIS]</scope>
</reference>
<comment type="function">
    <text evidence="1">Component of the ribosome, a large ribonucleoprotein complex responsible for the synthesis of proteins in the cell. The small ribosomal subunit (SSU) binds messenger RNAs (mRNAs) and translates the encoded message by selecting cognate aminoacyl-transfer RNA (tRNA) molecules. The large subunit (LSU) contains the ribosomal catalytic site termed the peptidyl transferase center (PTC), which catalyzes the formation of peptide bonds, thereby polymerizing the amino acids delivered by tRNAs into a polypeptide chain. The nascent polypeptides leave the ribosome through a tunnel in the LSU and interact with protein factors that function in enzymatic processing, targeting, and the membrane insertion of nascent chains at the exit of the ribosomal tunnel.</text>
</comment>
<comment type="subunit">
    <text evidence="2">Component of the small ribosomal subunit (SSU). Mature yeast ribosomes consist of a small (40S) and a large (60S) subunit. The 40S small subunit contains 1 molecule of ribosomal RNA (18S rRNA) and at least 33 different proteins. The large 60S subunit contains 3 rRNA molecules (25S, 5.8S and 5S rRNA) and at least 46 different proteins. eS1 interacts directly with uS11 and eS26, which form part of the mRNA exit tunnel.</text>
</comment>
<comment type="subcellular location">
    <subcellularLocation>
        <location evidence="2 3">Cytoplasm</location>
    </subcellularLocation>
</comment>
<comment type="miscellaneous">
    <text>There are 2 genes for eS1 in S.pombe.</text>
</comment>
<comment type="similarity">
    <text evidence="2">Belongs to the eukaryotic ribosomal protein eS1 family.</text>
</comment>
<name>RS3A2_SCHPO</name>